<protein>
    <recommendedName>
        <fullName evidence="2">Putative transcriptional regulator XtpA</fullName>
    </recommendedName>
</protein>
<organism>
    <name type="scientific">Escherichia coli (strain K12)</name>
    <dbReference type="NCBI Taxonomy" id="83333"/>
    <lineage>
        <taxon>Bacteria</taxon>
        <taxon>Pseudomonadati</taxon>
        <taxon>Pseudomonadota</taxon>
        <taxon>Gammaproteobacteria</taxon>
        <taxon>Enterobacterales</taxon>
        <taxon>Enterobacteriaceae</taxon>
        <taxon>Escherichia</taxon>
    </lineage>
</organism>
<evidence type="ECO:0000269" key="1">
    <source>
    </source>
</evidence>
<evidence type="ECO:0000303" key="2">
    <source>
    </source>
</evidence>
<evidence type="ECO:0000305" key="3">
    <source>
    </source>
</evidence>
<feature type="chain" id="PRO_0000461890" description="Putative transcriptional regulator XtpA">
    <location>
        <begin position="1"/>
        <end position="60"/>
    </location>
</feature>
<feature type="mutagenesis site" description="Increased sensitivity to aminoglycoside neomycin." evidence="1">
    <location>
        <begin position="4"/>
        <end position="60"/>
    </location>
</feature>
<feature type="mutagenesis site" description="Increased sensitivity to aminoglycoside neomycin." evidence="1">
    <location>
        <begin position="50"/>
        <end position="60"/>
    </location>
</feature>
<gene>
    <name evidence="2" type="primary">xtpA</name>
    <name type="ordered locus">b4845</name>
</gene>
<reference key="1">
    <citation type="journal article" date="1997" name="Science">
        <title>The complete genome sequence of Escherichia coli K-12.</title>
        <authorList>
            <person name="Blattner F.R."/>
            <person name="Plunkett G. III"/>
            <person name="Bloch C.A."/>
            <person name="Perna N.T."/>
            <person name="Burland V."/>
            <person name="Riley M."/>
            <person name="Collado-Vides J."/>
            <person name="Glasner J.D."/>
            <person name="Rode C.K."/>
            <person name="Mayhew G.F."/>
            <person name="Gregor J."/>
            <person name="Davis N.W."/>
            <person name="Kirkpatrick H.A."/>
            <person name="Goeden M.A."/>
            <person name="Rose D.J."/>
            <person name="Mau B."/>
            <person name="Shao Y."/>
        </authorList>
    </citation>
    <scope>NUCLEOTIDE SEQUENCE [LARGE SCALE GENOMIC DNA]</scope>
    <source>
        <strain>K12 / MG1655 / ATCC 47076</strain>
    </source>
</reference>
<reference key="2">
    <citation type="journal article" date="2022" name="J. Biochem.">
        <title>A leaderless mRNA including tRNA-like sequence encodes a small peptide that regulates the expression of GcvB small RNA in Escherichia coli.</title>
        <authorList>
            <person name="Muto A."/>
            <person name="Goto S."/>
            <person name="Kurita D."/>
            <person name="Ushida C."/>
            <person name="Soma A."/>
            <person name="Himeno H."/>
        </authorList>
    </citation>
    <scope>IDENTIFICATION</scope>
    <scope>FUNCTION</scope>
    <scope>DISRUPTION PHENOTYPE</scope>
    <scope>MUTAGENESIS OF 50-PRO--PHE-60</scope>
    <scope>MUTAGENESIS OF 4-TRP--PHE-60</scope>
    <source>
        <strain>K12 / W3110 / ATCC 27325 / DSM 5911</strain>
    </source>
</reference>
<proteinExistence type="evidence at protein level"/>
<accession>P0DXX6</accession>
<comment type="function">
    <text evidence="1 3">Controls the expression of small non-coding RNA GcvB, which represses the expression of many amino acid transporter proteins and uptake of aminoglycoside antibiotics in cells (PubMed:35081614). Might be a transcriptional activator (Probable) (PubMed:35081614). An RNA (xtr) with a tRNA-like fold possibly derived from tRNA-Arg(UCG) is encoded entirely within the protein; xtr does not have the sequence corresponding to tRNA anticodon or variable arms (PubMed:35081614). 10 synonymous codon changes in the xtr region of xtpA have the same phenotype as a deletion mutation, suggesting the mRNA secondary structure is important for function (PubMed:35081614).</text>
</comment>
<comment type="disruption phenotype">
    <text evidence="1">Increased susceptibility to sub-lethal concentrations of aminoglycoside antibiotics neomycin, kanamycin, streptomycin, spectinomycin and kasugamycin, but not non-aminoglycosides tetracycline, chloramphenicol or erythromycin. 10-fold increased transcription of gvcB.</text>
</comment>
<comment type="miscellaneous">
    <text evidence="1">This is a leaderless mRNA.</text>
</comment>
<keyword id="KW-0046">Antibiotic resistance</keyword>
<keyword id="KW-1185">Reference proteome</keyword>
<keyword id="KW-0804">Transcription</keyword>
<keyword id="KW-0805">Transcription regulation</keyword>
<sequence length="60" mass="6969">MFVWGLFCILRIALKPDRKYAVRLISKTAISSSGRADDNQDCCMVRGSRPRWRSNFSKLF</sequence>
<dbReference type="EMBL" id="U00096">
    <property type="status" value="NOT_ANNOTATED_CDS"/>
    <property type="molecule type" value="Genomic_DNA"/>
</dbReference>
<dbReference type="Proteomes" id="UP000000625">
    <property type="component" value="Chromosome"/>
</dbReference>
<dbReference type="GO" id="GO:0046677">
    <property type="term" value="P:response to antibiotic"/>
    <property type="evidence" value="ECO:0007669"/>
    <property type="project" value="UniProtKB-KW"/>
</dbReference>
<name>XTPA_ECOLI</name>